<name>TX318_LYCSI</name>
<evidence type="ECO:0000250" key="1"/>
<evidence type="ECO:0000255" key="2"/>
<evidence type="ECO:0000305" key="3"/>
<keyword id="KW-1015">Disulfide bond</keyword>
<keyword id="KW-0960">Knottin</keyword>
<keyword id="KW-0964">Secreted</keyword>
<keyword id="KW-0732">Signal</keyword>
<keyword id="KW-0800">Toxin</keyword>
<proteinExistence type="evidence at transcript level"/>
<reference key="1">
    <citation type="journal article" date="2010" name="Zoology">
        <title>Transcriptome analysis of the venom glands of the Chinese wolf spider Lycosa singoriensis.</title>
        <authorList>
            <person name="Zhang Y."/>
            <person name="Chen J."/>
            <person name="Tang X."/>
            <person name="Wang F."/>
            <person name="Jiang L."/>
            <person name="Xiong X."/>
            <person name="Wang M."/>
            <person name="Rong M."/>
            <person name="Liu Z."/>
            <person name="Liang S."/>
        </authorList>
    </citation>
    <scope>NUCLEOTIDE SEQUENCE [LARGE SCALE MRNA]</scope>
    <source>
        <tissue>Venom gland</tissue>
    </source>
</reference>
<feature type="signal peptide" evidence="2">
    <location>
        <begin position="1"/>
        <end position="20"/>
    </location>
</feature>
<feature type="propeptide" id="PRO_0000401641" evidence="1">
    <location>
        <begin position="21"/>
        <end position="44"/>
    </location>
</feature>
<feature type="chain" id="PRO_0000401642" description="U3-lycotoxin-Ls1a">
    <location>
        <begin position="45"/>
        <end position="115"/>
    </location>
</feature>
<feature type="disulfide bond" evidence="1">
    <location>
        <begin position="48"/>
        <end position="63"/>
    </location>
</feature>
<feature type="disulfide bond" evidence="1">
    <location>
        <begin position="55"/>
        <end position="72"/>
    </location>
</feature>
<feature type="disulfide bond" evidence="1">
    <location>
        <begin position="62"/>
        <end position="87"/>
    </location>
</feature>
<feature type="disulfide bond" evidence="1">
    <location>
        <begin position="74"/>
        <end position="85"/>
    </location>
</feature>
<organism>
    <name type="scientific">Lycosa singoriensis</name>
    <name type="common">Wolf spider</name>
    <name type="synonym">Aranea singoriensis</name>
    <dbReference type="NCBI Taxonomy" id="434756"/>
    <lineage>
        <taxon>Eukaryota</taxon>
        <taxon>Metazoa</taxon>
        <taxon>Ecdysozoa</taxon>
        <taxon>Arthropoda</taxon>
        <taxon>Chelicerata</taxon>
        <taxon>Arachnida</taxon>
        <taxon>Araneae</taxon>
        <taxon>Araneomorphae</taxon>
        <taxon>Entelegynae</taxon>
        <taxon>Lycosoidea</taxon>
        <taxon>Lycosidae</taxon>
        <taxon>Lycosa</taxon>
    </lineage>
</organism>
<sequence length="115" mass="13318">MKFVLLFGVFLVTLFSYSSAEMLDDFDQADEDELLSLIEKEEARAKECTPRFYDCSHDRHSCCRSELFKDVCTCFYPEGGDNEVCTCQQPKHLKYMEKAADKAKKFGGKIKKWFG</sequence>
<dbReference type="EMBL" id="EU925983">
    <property type="protein sequence ID" value="ACI41315.1"/>
    <property type="status" value="ALT_FRAME"/>
    <property type="molecule type" value="mRNA"/>
</dbReference>
<dbReference type="EMBL" id="EU925997">
    <property type="protein sequence ID" value="ACI41329.1"/>
    <property type="molecule type" value="mRNA"/>
</dbReference>
<dbReference type="EMBL" id="FM863987">
    <property type="protein sequence ID" value="CAS03585.1"/>
    <property type="molecule type" value="mRNA"/>
</dbReference>
<dbReference type="EMBL" id="FM864001">
    <property type="protein sequence ID" value="CAS03599.1"/>
    <property type="molecule type" value="mRNA"/>
</dbReference>
<dbReference type="SMR" id="B6DCR3"/>
<dbReference type="ArachnoServer" id="AS000938">
    <property type="toxin name" value="U3-lycotoxin-Ls1a"/>
</dbReference>
<dbReference type="ArachnoServer" id="AS000932">
    <property type="toxin name" value="U3-lycotoxin-Ls1t"/>
</dbReference>
<dbReference type="GO" id="GO:0005576">
    <property type="term" value="C:extracellular region"/>
    <property type="evidence" value="ECO:0007669"/>
    <property type="project" value="UniProtKB-SubCell"/>
</dbReference>
<dbReference type="GO" id="GO:0090729">
    <property type="term" value="F:toxin activity"/>
    <property type="evidence" value="ECO:0007669"/>
    <property type="project" value="UniProtKB-KW"/>
</dbReference>
<dbReference type="InterPro" id="IPR019553">
    <property type="entry name" value="Spider_toxin_CSTX_knottin"/>
</dbReference>
<dbReference type="InterPro" id="IPR011142">
    <property type="entry name" value="Spider_toxin_CSTX_Knottin_CS"/>
</dbReference>
<dbReference type="Pfam" id="PF10530">
    <property type="entry name" value="Toxin_35"/>
    <property type="match status" value="1"/>
</dbReference>
<dbReference type="PROSITE" id="PS60029">
    <property type="entry name" value="SPIDER_CSTX"/>
    <property type="match status" value="1"/>
</dbReference>
<protein>
    <recommendedName>
        <fullName>U3-lycotoxin-Ls1a</fullName>
    </recommendedName>
    <alternativeName>
        <fullName>Toxin-like structure LSTX-B18</fullName>
    </alternativeName>
    <alternativeName>
        <fullName>Toxin-like structure LSTX-B4</fullName>
    </alternativeName>
</protein>
<comment type="subcellular location">
    <subcellularLocation>
        <location evidence="1">Secreted</location>
    </subcellularLocation>
</comment>
<comment type="tissue specificity">
    <text>Expressed by the venom gland.</text>
</comment>
<comment type="domain">
    <text evidence="1">The presence of a 'disulfide through disulfide knot' structurally defines this protein as a knottin.</text>
</comment>
<comment type="similarity">
    <text evidence="3">Belongs to the neurotoxin 19 (CSTX) family. 01 subfamily.</text>
</comment>
<comment type="sequence caution" evidence="3">
    <conflict type="frameshift">
        <sequence resource="EMBL-CDS" id="ACI41315"/>
    </conflict>
</comment>
<accession>B6DCR3</accession>
<accession>B6DCP9</accession>